<name>PFKA_SALHS</name>
<accession>B4TCK0</accession>
<organism>
    <name type="scientific">Salmonella heidelberg (strain SL476)</name>
    <dbReference type="NCBI Taxonomy" id="454169"/>
    <lineage>
        <taxon>Bacteria</taxon>
        <taxon>Pseudomonadati</taxon>
        <taxon>Pseudomonadota</taxon>
        <taxon>Gammaproteobacteria</taxon>
        <taxon>Enterobacterales</taxon>
        <taxon>Enterobacteriaceae</taxon>
        <taxon>Salmonella</taxon>
    </lineage>
</organism>
<keyword id="KW-0021">Allosteric enzyme</keyword>
<keyword id="KW-0067">ATP-binding</keyword>
<keyword id="KW-0963">Cytoplasm</keyword>
<keyword id="KW-0324">Glycolysis</keyword>
<keyword id="KW-0418">Kinase</keyword>
<keyword id="KW-0460">Magnesium</keyword>
<keyword id="KW-0479">Metal-binding</keyword>
<keyword id="KW-0547">Nucleotide-binding</keyword>
<keyword id="KW-0808">Transferase</keyword>
<evidence type="ECO:0000255" key="1">
    <source>
        <dbReference type="HAMAP-Rule" id="MF_00339"/>
    </source>
</evidence>
<feature type="chain" id="PRO_1000120054" description="ATP-dependent 6-phosphofructokinase">
    <location>
        <begin position="1"/>
        <end position="320"/>
    </location>
</feature>
<feature type="active site" description="Proton acceptor" evidence="1">
    <location>
        <position position="128"/>
    </location>
</feature>
<feature type="binding site" evidence="1">
    <location>
        <position position="12"/>
    </location>
    <ligand>
        <name>ATP</name>
        <dbReference type="ChEBI" id="CHEBI:30616"/>
    </ligand>
</feature>
<feature type="binding site" evidence="1">
    <location>
        <begin position="22"/>
        <end position="26"/>
    </location>
    <ligand>
        <name>ADP</name>
        <dbReference type="ChEBI" id="CHEBI:456216"/>
        <note>allosteric activator; ligand shared between dimeric partners</note>
    </ligand>
</feature>
<feature type="binding site" evidence="1">
    <location>
        <begin position="55"/>
        <end position="60"/>
    </location>
    <ligand>
        <name>ADP</name>
        <dbReference type="ChEBI" id="CHEBI:456216"/>
        <note>allosteric activator; ligand shared between dimeric partners</note>
    </ligand>
</feature>
<feature type="binding site" evidence="1">
    <location>
        <begin position="73"/>
        <end position="74"/>
    </location>
    <ligand>
        <name>ATP</name>
        <dbReference type="ChEBI" id="CHEBI:30616"/>
    </ligand>
</feature>
<feature type="binding site" evidence="1">
    <location>
        <begin position="103"/>
        <end position="106"/>
    </location>
    <ligand>
        <name>ATP</name>
        <dbReference type="ChEBI" id="CHEBI:30616"/>
    </ligand>
</feature>
<feature type="binding site" evidence="1">
    <location>
        <position position="104"/>
    </location>
    <ligand>
        <name>Mg(2+)</name>
        <dbReference type="ChEBI" id="CHEBI:18420"/>
        <note>catalytic</note>
    </ligand>
</feature>
<feature type="binding site" description="in other chain" evidence="1">
    <location>
        <begin position="126"/>
        <end position="128"/>
    </location>
    <ligand>
        <name>substrate</name>
        <note>ligand shared between dimeric partners</note>
    </ligand>
</feature>
<feature type="binding site" description="in other chain" evidence="1">
    <location>
        <position position="155"/>
    </location>
    <ligand>
        <name>ADP</name>
        <dbReference type="ChEBI" id="CHEBI:456216"/>
        <note>allosteric activator; ligand shared between dimeric partners</note>
    </ligand>
</feature>
<feature type="binding site" evidence="1">
    <location>
        <position position="163"/>
    </location>
    <ligand>
        <name>substrate</name>
        <note>ligand shared between dimeric partners</note>
    </ligand>
</feature>
<feature type="binding site" description="in other chain" evidence="1">
    <location>
        <begin position="170"/>
        <end position="172"/>
    </location>
    <ligand>
        <name>substrate</name>
        <note>ligand shared between dimeric partners</note>
    </ligand>
</feature>
<feature type="binding site" description="in other chain" evidence="1">
    <location>
        <begin position="186"/>
        <end position="188"/>
    </location>
    <ligand>
        <name>ADP</name>
        <dbReference type="ChEBI" id="CHEBI:456216"/>
        <note>allosteric activator; ligand shared between dimeric partners</note>
    </ligand>
</feature>
<feature type="binding site" description="in other chain" evidence="1">
    <location>
        <position position="212"/>
    </location>
    <ligand>
        <name>ADP</name>
        <dbReference type="ChEBI" id="CHEBI:456216"/>
        <note>allosteric activator; ligand shared between dimeric partners</note>
    </ligand>
</feature>
<feature type="binding site" description="in other chain" evidence="1">
    <location>
        <begin position="214"/>
        <end position="216"/>
    </location>
    <ligand>
        <name>ADP</name>
        <dbReference type="ChEBI" id="CHEBI:456216"/>
        <note>allosteric activator; ligand shared between dimeric partners</note>
    </ligand>
</feature>
<feature type="binding site" description="in other chain" evidence="1">
    <location>
        <position position="223"/>
    </location>
    <ligand>
        <name>substrate</name>
        <note>ligand shared between dimeric partners</note>
    </ligand>
</feature>
<feature type="binding site" evidence="1">
    <location>
        <position position="244"/>
    </location>
    <ligand>
        <name>substrate</name>
        <note>ligand shared between dimeric partners</note>
    </ligand>
</feature>
<feature type="binding site" description="in other chain" evidence="1">
    <location>
        <begin position="250"/>
        <end position="253"/>
    </location>
    <ligand>
        <name>substrate</name>
        <note>ligand shared between dimeric partners</note>
    </ligand>
</feature>
<sequence>MIKKIGVLTSGGDAPGMNAAIRGVVRAALTEGLEVMGIYDGYLGLYEDRMVQLDRYSVSDMINRGGTFLGSARFPEFRDENIRAVAIENLKKRGIDALVVIGGDGSYMGAKRLTEMGFPCIGLPGTIDNDIKGTDYTIGYFTALGTVVEAIDRLRDTSSSHQRISIVEVMGRYCGDLTLAAAIAGGCEFIVVPEVEFNREDLVAEIKAGIAKGKKHAIVAITEHMCDVDELAHFIEKETGRETRATVLGHIQRGGSPVPYDRILASRMGAYAIDLLLEGHGGRCVGIQNEQLVHHDIIDAIENMKRPFKSDWMECAKKLY</sequence>
<comment type="function">
    <text evidence="1">Catalyzes the phosphorylation of D-fructose 6-phosphate to fructose 1,6-bisphosphate by ATP, the first committing step of glycolysis.</text>
</comment>
<comment type="catalytic activity">
    <reaction evidence="1">
        <text>beta-D-fructose 6-phosphate + ATP = beta-D-fructose 1,6-bisphosphate + ADP + H(+)</text>
        <dbReference type="Rhea" id="RHEA:16109"/>
        <dbReference type="ChEBI" id="CHEBI:15378"/>
        <dbReference type="ChEBI" id="CHEBI:30616"/>
        <dbReference type="ChEBI" id="CHEBI:32966"/>
        <dbReference type="ChEBI" id="CHEBI:57634"/>
        <dbReference type="ChEBI" id="CHEBI:456216"/>
        <dbReference type="EC" id="2.7.1.11"/>
    </reaction>
</comment>
<comment type="cofactor">
    <cofactor evidence="1">
        <name>Mg(2+)</name>
        <dbReference type="ChEBI" id="CHEBI:18420"/>
    </cofactor>
</comment>
<comment type="activity regulation">
    <text evidence="1">Allosterically activated by ADP and other diphosphonucleosides, and allosterically inhibited by phosphoenolpyruvate.</text>
</comment>
<comment type="pathway">
    <text evidence="1">Carbohydrate degradation; glycolysis; D-glyceraldehyde 3-phosphate and glycerone phosphate from D-glucose: step 3/4.</text>
</comment>
<comment type="subunit">
    <text evidence="1">Homotetramer.</text>
</comment>
<comment type="subcellular location">
    <subcellularLocation>
        <location evidence="1">Cytoplasm</location>
    </subcellularLocation>
</comment>
<comment type="similarity">
    <text evidence="1">Belongs to the phosphofructokinase type A (PFKA) family. ATP-dependent PFK group I subfamily. Prokaryotic clade 'B1' sub-subfamily.</text>
</comment>
<dbReference type="EC" id="2.7.1.11" evidence="1"/>
<dbReference type="EMBL" id="CP001120">
    <property type="protein sequence ID" value="ACF69233.1"/>
    <property type="molecule type" value="Genomic_DNA"/>
</dbReference>
<dbReference type="RefSeq" id="WP_000591793.1">
    <property type="nucleotide sequence ID" value="NC_011083.1"/>
</dbReference>
<dbReference type="SMR" id="B4TCK0"/>
<dbReference type="GeneID" id="66758327"/>
<dbReference type="KEGG" id="seh:SeHA_C4393"/>
<dbReference type="HOGENOM" id="CLU_020655_0_1_6"/>
<dbReference type="UniPathway" id="UPA00109">
    <property type="reaction ID" value="UER00182"/>
</dbReference>
<dbReference type="Proteomes" id="UP000001866">
    <property type="component" value="Chromosome"/>
</dbReference>
<dbReference type="GO" id="GO:0005945">
    <property type="term" value="C:6-phosphofructokinase complex"/>
    <property type="evidence" value="ECO:0007669"/>
    <property type="project" value="TreeGrafter"/>
</dbReference>
<dbReference type="GO" id="GO:0003872">
    <property type="term" value="F:6-phosphofructokinase activity"/>
    <property type="evidence" value="ECO:0007669"/>
    <property type="project" value="UniProtKB-UniRule"/>
</dbReference>
<dbReference type="GO" id="GO:0016208">
    <property type="term" value="F:AMP binding"/>
    <property type="evidence" value="ECO:0007669"/>
    <property type="project" value="TreeGrafter"/>
</dbReference>
<dbReference type="GO" id="GO:0005524">
    <property type="term" value="F:ATP binding"/>
    <property type="evidence" value="ECO:0007669"/>
    <property type="project" value="UniProtKB-KW"/>
</dbReference>
<dbReference type="GO" id="GO:0070095">
    <property type="term" value="F:fructose-6-phosphate binding"/>
    <property type="evidence" value="ECO:0007669"/>
    <property type="project" value="TreeGrafter"/>
</dbReference>
<dbReference type="GO" id="GO:0042802">
    <property type="term" value="F:identical protein binding"/>
    <property type="evidence" value="ECO:0007669"/>
    <property type="project" value="TreeGrafter"/>
</dbReference>
<dbReference type="GO" id="GO:0046872">
    <property type="term" value="F:metal ion binding"/>
    <property type="evidence" value="ECO:0007669"/>
    <property type="project" value="UniProtKB-KW"/>
</dbReference>
<dbReference type="GO" id="GO:0048029">
    <property type="term" value="F:monosaccharide binding"/>
    <property type="evidence" value="ECO:0007669"/>
    <property type="project" value="TreeGrafter"/>
</dbReference>
<dbReference type="GO" id="GO:0061621">
    <property type="term" value="P:canonical glycolysis"/>
    <property type="evidence" value="ECO:0007669"/>
    <property type="project" value="TreeGrafter"/>
</dbReference>
<dbReference type="GO" id="GO:0030388">
    <property type="term" value="P:fructose 1,6-bisphosphate metabolic process"/>
    <property type="evidence" value="ECO:0007669"/>
    <property type="project" value="TreeGrafter"/>
</dbReference>
<dbReference type="GO" id="GO:0006002">
    <property type="term" value="P:fructose 6-phosphate metabolic process"/>
    <property type="evidence" value="ECO:0007669"/>
    <property type="project" value="InterPro"/>
</dbReference>
<dbReference type="CDD" id="cd00763">
    <property type="entry name" value="Bacterial_PFK"/>
    <property type="match status" value="1"/>
</dbReference>
<dbReference type="FunFam" id="3.40.50.450:FF:000001">
    <property type="entry name" value="ATP-dependent 6-phosphofructokinase"/>
    <property type="match status" value="1"/>
</dbReference>
<dbReference type="FunFam" id="3.40.50.460:FF:000002">
    <property type="entry name" value="ATP-dependent 6-phosphofructokinase"/>
    <property type="match status" value="1"/>
</dbReference>
<dbReference type="Gene3D" id="3.40.50.450">
    <property type="match status" value="1"/>
</dbReference>
<dbReference type="Gene3D" id="3.40.50.460">
    <property type="entry name" value="Phosphofructokinase domain"/>
    <property type="match status" value="1"/>
</dbReference>
<dbReference type="HAMAP" id="MF_00339">
    <property type="entry name" value="Phosphofructokinase_I_B1"/>
    <property type="match status" value="1"/>
</dbReference>
<dbReference type="InterPro" id="IPR022953">
    <property type="entry name" value="ATP_PFK"/>
</dbReference>
<dbReference type="InterPro" id="IPR012003">
    <property type="entry name" value="ATP_PFK_prok-type"/>
</dbReference>
<dbReference type="InterPro" id="IPR012828">
    <property type="entry name" value="PFKA_ATP_prok"/>
</dbReference>
<dbReference type="InterPro" id="IPR015912">
    <property type="entry name" value="Phosphofructokinase_CS"/>
</dbReference>
<dbReference type="InterPro" id="IPR000023">
    <property type="entry name" value="Phosphofructokinase_dom"/>
</dbReference>
<dbReference type="InterPro" id="IPR035966">
    <property type="entry name" value="PKF_sf"/>
</dbReference>
<dbReference type="NCBIfam" id="TIGR02482">
    <property type="entry name" value="PFKA_ATP"/>
    <property type="match status" value="1"/>
</dbReference>
<dbReference type="NCBIfam" id="NF002872">
    <property type="entry name" value="PRK03202.1"/>
    <property type="match status" value="1"/>
</dbReference>
<dbReference type="PANTHER" id="PTHR13697:SF4">
    <property type="entry name" value="ATP-DEPENDENT 6-PHOSPHOFRUCTOKINASE"/>
    <property type="match status" value="1"/>
</dbReference>
<dbReference type="PANTHER" id="PTHR13697">
    <property type="entry name" value="PHOSPHOFRUCTOKINASE"/>
    <property type="match status" value="1"/>
</dbReference>
<dbReference type="Pfam" id="PF00365">
    <property type="entry name" value="PFK"/>
    <property type="match status" value="1"/>
</dbReference>
<dbReference type="PIRSF" id="PIRSF000532">
    <property type="entry name" value="ATP_PFK_prok"/>
    <property type="match status" value="1"/>
</dbReference>
<dbReference type="PRINTS" id="PR00476">
    <property type="entry name" value="PHFRCTKINASE"/>
</dbReference>
<dbReference type="SUPFAM" id="SSF53784">
    <property type="entry name" value="Phosphofructokinase"/>
    <property type="match status" value="1"/>
</dbReference>
<dbReference type="PROSITE" id="PS00433">
    <property type="entry name" value="PHOSPHOFRUCTOKINASE"/>
    <property type="match status" value="1"/>
</dbReference>
<proteinExistence type="inferred from homology"/>
<gene>
    <name evidence="1" type="primary">pfkA</name>
    <name type="ordered locus">SeHA_C4393</name>
</gene>
<protein>
    <recommendedName>
        <fullName evidence="1">ATP-dependent 6-phosphofructokinase</fullName>
        <shortName evidence="1">ATP-PFK</shortName>
        <shortName evidence="1">Phosphofructokinase</shortName>
        <ecNumber evidence="1">2.7.1.11</ecNumber>
    </recommendedName>
    <alternativeName>
        <fullName evidence="1">Phosphohexokinase</fullName>
    </alternativeName>
</protein>
<reference key="1">
    <citation type="journal article" date="2011" name="J. Bacteriol.">
        <title>Comparative genomics of 28 Salmonella enterica isolates: evidence for CRISPR-mediated adaptive sublineage evolution.</title>
        <authorList>
            <person name="Fricke W.F."/>
            <person name="Mammel M.K."/>
            <person name="McDermott P.F."/>
            <person name="Tartera C."/>
            <person name="White D.G."/>
            <person name="Leclerc J.E."/>
            <person name="Ravel J."/>
            <person name="Cebula T.A."/>
        </authorList>
    </citation>
    <scope>NUCLEOTIDE SEQUENCE [LARGE SCALE GENOMIC DNA]</scope>
    <source>
        <strain>SL476</strain>
    </source>
</reference>